<accession>B4TNU7</accession>
<evidence type="ECO:0000255" key="1">
    <source>
        <dbReference type="HAMAP-Rule" id="MF_01001"/>
    </source>
</evidence>
<feature type="chain" id="PRO_1000134589" description="UDP-N-acetyl-D-mannosaminuronic acid transferase">
    <location>
        <begin position="1"/>
        <end position="246"/>
    </location>
</feature>
<dbReference type="EC" id="2.4.1.180" evidence="1"/>
<dbReference type="EMBL" id="CP001127">
    <property type="protein sequence ID" value="ACF89299.1"/>
    <property type="molecule type" value="Genomic_DNA"/>
</dbReference>
<dbReference type="RefSeq" id="WP_000183625.1">
    <property type="nucleotide sequence ID" value="NC_011094.1"/>
</dbReference>
<dbReference type="SMR" id="B4TNU7"/>
<dbReference type="CAZy" id="GT26">
    <property type="family name" value="Glycosyltransferase Family 26"/>
</dbReference>
<dbReference type="KEGG" id="sew:SeSA_A4140"/>
<dbReference type="HOGENOM" id="CLU_063203_3_2_6"/>
<dbReference type="UniPathway" id="UPA00566"/>
<dbReference type="Proteomes" id="UP000001865">
    <property type="component" value="Chromosome"/>
</dbReference>
<dbReference type="GO" id="GO:0047241">
    <property type="term" value="F:lipopolysaccharide N-acetylmannosaminouronosyltransferase activity"/>
    <property type="evidence" value="ECO:0007669"/>
    <property type="project" value="UniProtKB-UniRule"/>
</dbReference>
<dbReference type="GO" id="GO:0009246">
    <property type="term" value="P:enterobacterial common antigen biosynthetic process"/>
    <property type="evidence" value="ECO:0007669"/>
    <property type="project" value="UniProtKB-UniRule"/>
</dbReference>
<dbReference type="CDD" id="cd06533">
    <property type="entry name" value="Glyco_transf_WecG_TagA"/>
    <property type="match status" value="1"/>
</dbReference>
<dbReference type="HAMAP" id="MF_01001">
    <property type="entry name" value="WecG_RffM"/>
    <property type="match status" value="1"/>
</dbReference>
<dbReference type="InterPro" id="IPR023085">
    <property type="entry name" value="UDP-ManNAcA_Trfase_WecG"/>
</dbReference>
<dbReference type="InterPro" id="IPR004629">
    <property type="entry name" value="WecG_TagA_CpsF"/>
</dbReference>
<dbReference type="NCBIfam" id="NF002980">
    <property type="entry name" value="PRK03692.1"/>
    <property type="match status" value="1"/>
</dbReference>
<dbReference type="NCBIfam" id="TIGR00696">
    <property type="entry name" value="wecG_tagA_cpsF"/>
    <property type="match status" value="1"/>
</dbReference>
<dbReference type="PANTHER" id="PTHR34136">
    <property type="match status" value="1"/>
</dbReference>
<dbReference type="PANTHER" id="PTHR34136:SF1">
    <property type="entry name" value="UDP-N-ACETYL-D-MANNOSAMINURONIC ACID TRANSFERASE"/>
    <property type="match status" value="1"/>
</dbReference>
<dbReference type="Pfam" id="PF03808">
    <property type="entry name" value="Glyco_tran_WecG"/>
    <property type="match status" value="1"/>
</dbReference>
<organism>
    <name type="scientific">Salmonella schwarzengrund (strain CVM19633)</name>
    <dbReference type="NCBI Taxonomy" id="439843"/>
    <lineage>
        <taxon>Bacteria</taxon>
        <taxon>Pseudomonadati</taxon>
        <taxon>Pseudomonadota</taxon>
        <taxon>Gammaproteobacteria</taxon>
        <taxon>Enterobacterales</taxon>
        <taxon>Enterobacteriaceae</taxon>
        <taxon>Salmonella</taxon>
    </lineage>
</organism>
<reference key="1">
    <citation type="journal article" date="2011" name="J. Bacteriol.">
        <title>Comparative genomics of 28 Salmonella enterica isolates: evidence for CRISPR-mediated adaptive sublineage evolution.</title>
        <authorList>
            <person name="Fricke W.F."/>
            <person name="Mammel M.K."/>
            <person name="McDermott P.F."/>
            <person name="Tartera C."/>
            <person name="White D.G."/>
            <person name="Leclerc J.E."/>
            <person name="Ravel J."/>
            <person name="Cebula T.A."/>
        </authorList>
    </citation>
    <scope>NUCLEOTIDE SEQUENCE [LARGE SCALE GENOMIC DNA]</scope>
    <source>
        <strain>CVM19633</strain>
    </source>
</reference>
<keyword id="KW-0328">Glycosyltransferase</keyword>
<keyword id="KW-0808">Transferase</keyword>
<sequence length="246" mass="27587">MTNNAAAPLYSLRGLPLIGWRDMSHALNYLFADGQLKQGTLVAINAEKLLTAEDNPEVRALIAAAEFKYADGISVVRSIRKKFPQAQVSRVAGADLWEALMARAGKEGTPVFLVGGKPEVLAQTEAKLRTQWNVNIVGSQDGYFTPEQRQALFSRIHASGAKIVTVAMGSPKQELLMRDCREVHPHALYMGVGGTYDVFTGHVKRAPKIWQNLGLEWLYRLLSQPKRITRQMRLLRYLRWHYTGDL</sequence>
<gene>
    <name evidence="1" type="primary">wecG</name>
    <name evidence="1" type="synonym">rffM</name>
    <name type="ordered locus">SeSA_A4140</name>
</gene>
<name>WECG_SALSV</name>
<protein>
    <recommendedName>
        <fullName evidence="1">UDP-N-acetyl-D-mannosaminuronic acid transferase</fullName>
        <shortName evidence="1">UDP-ManNAcA transferase</shortName>
        <ecNumber evidence="1">2.4.1.180</ecNumber>
    </recommendedName>
</protein>
<comment type="function">
    <text evidence="1">Catalyzes the synthesis of Und-PP-GlcNAc-ManNAcA (Lipid II), the second lipid-linked intermediate involved in enterobacterial common antigen (ECA) synthesis.</text>
</comment>
<comment type="catalytic activity">
    <reaction evidence="1">
        <text>UDP-N-acetyl-alpha-D-mannosaminouronate + N-acetyl-alpha-D-glucosaminyl-di-trans,octa-cis-undecaprenyl diphosphate = beta-D-ManNAcA-(1-&gt;4)-alpha-D-GlcNAc-di-trans,octa-cis-undecaprenyl diphosphate + UDP + H(+)</text>
        <dbReference type="Rhea" id="RHEA:28366"/>
        <dbReference type="ChEBI" id="CHEBI:15378"/>
        <dbReference type="ChEBI" id="CHEBI:58223"/>
        <dbReference type="ChEBI" id="CHEBI:61495"/>
        <dbReference type="ChEBI" id="CHEBI:62959"/>
        <dbReference type="ChEBI" id="CHEBI:70731"/>
        <dbReference type="EC" id="2.4.1.180"/>
    </reaction>
</comment>
<comment type="pathway">
    <text evidence="1">Bacterial outer membrane biogenesis; enterobacterial common antigen biosynthesis.</text>
</comment>
<comment type="similarity">
    <text evidence="1">Belongs to the glycosyltransferase 26 family.</text>
</comment>
<proteinExistence type="inferred from homology"/>